<keyword id="KW-0002">3D-structure</keyword>
<keyword id="KW-0025">Alternative splicing</keyword>
<keyword id="KW-0028">Amino-acid biosynthesis</keyword>
<keyword id="KW-0112">Calmodulin-binding</keyword>
<keyword id="KW-0198">Cysteine biosynthesis</keyword>
<keyword id="KW-0963">Cytoplasm</keyword>
<keyword id="KW-0225">Disease variant</keyword>
<keyword id="KW-0443">Lipid metabolism</keyword>
<keyword id="KW-0456">Lyase</keyword>
<keyword id="KW-1267">Proteomics identification</keyword>
<keyword id="KW-0663">Pyridoxal phosphate</keyword>
<keyword id="KW-1185">Reference proteome</keyword>
<sequence>MQEKDASSQGFLPHFQHFATQAIHVGQDPEQWTSRAVVPPISLSTTFKQGAPGQHSGFEYSRSGNPTRNCLEKAVAALDGAKYCLAFASGLAATVTITHLLKAGDQIICMDDVYGGTNRYFRQVASEFGLKISFVDCSKIKLLEAAITPETKLVWIETPTNPTQKVIDIEGCAHIVHKHGDIILVVDNTFMSPYFQRPLALGADISMYSATKYMNGHSDVVMGLVSVNCESLHNRLRFLQNSLGAVPSPIDCYLCNRGLKTLHVRMEKHFKNGMAVAQFLESNPWVEKVIYPGLPSHPQHELVKRQCTGCTGMVTFYIKGTLQHAEIFLKNLKLFTLAESLGGFESLAELPAIMTHASVLKNDRDVLGISDTLIRLSVGLEDEEDLLEDLDQALKAAHPPSGSHS</sequence>
<accession>P32929</accession>
<accession>B4E1R2</accession>
<accession>E9PDV0</accession>
<accession>Q53FB3</accession>
<accession>Q53Y79</accession>
<accession>Q9H4W7</accession>
<accession>Q9H4W8</accession>
<organism>
    <name type="scientific">Homo sapiens</name>
    <name type="common">Human</name>
    <dbReference type="NCBI Taxonomy" id="9606"/>
    <lineage>
        <taxon>Eukaryota</taxon>
        <taxon>Metazoa</taxon>
        <taxon>Chordata</taxon>
        <taxon>Craniata</taxon>
        <taxon>Vertebrata</taxon>
        <taxon>Euteleostomi</taxon>
        <taxon>Mammalia</taxon>
        <taxon>Eutheria</taxon>
        <taxon>Euarchontoglires</taxon>
        <taxon>Primates</taxon>
        <taxon>Haplorrhini</taxon>
        <taxon>Catarrhini</taxon>
        <taxon>Hominidae</taxon>
        <taxon>Homo</taxon>
    </lineage>
</organism>
<proteinExistence type="evidence at protein level"/>
<comment type="function">
    <text evidence="1 2 3 8 9 10 11 13 14 20 28 29">Catalyzes the last step in the trans-sulfuration pathway from L-methionine to L-cysteine in a pyridoxal-5'-phosphate (PLP)-dependent manner, which consists on cleaving the L,L-cystathionine molecule into L-cysteine, ammonia and 2-oxobutanoate (PubMed:10212249, PubMed:18476726, PubMed:19261609, PubMed:19961860). Part of the L-cysteine derived from the trans-sulfuration pathway is utilized for biosynthesis of the ubiquitous antioxidant glutathione (PubMed:18476726). Besides its role in the conversion of L-cystathionine into L-cysteine, it utilizes L-cysteine and L-homocysteine as substrates (at much lower rates than L,L-cystathionine) to produce the endogenous gaseous signaling molecule hydrogen sulfide (H2S) (PubMed:10212249, PubMed:19019829, PubMed:19261609, PubMed:19961860). In vitro, it converts two L-cysteine molecules into lanthionine and H2S, also two L-homocysteine molecules to homolanthionine and H2S, which can be particularly relevant under conditions of severe hyperhomocysteinemia (which is a risk factor for cardiovascular disease, diabetes, and Alzheimer's disease) (PubMed:19261609). Lanthionine and homolanthionine are structural homologs of L,L-cystathionine that differ by the absence or presence of an extra methylene group, respectively (PubMed:19261609). Acts as a cysteine-protein sulfhydrase by mediating sulfhydration of target proteins: sulfhydration consists of converting -SH groups into -SSH on specific cysteine residues of target proteins such as GAPDH, PTPN1 and NF-kappa-B subunit RELA, thereby regulating their function (PubMed:22169477). By generating the gasotransmitter H2S, it participates in a number of physiological processes such as vasodilation, bone protection, and inflammation (Probable) (PubMed:29254196). Plays an essential role in myogenesis by contributing to the biogenesis of H2S in skeletal muscle tissue (By similarity). Can also accept homoserine as substrate (By similarity). Catalyzes the elimination of selenocystathionine (which can be derived from the diet) to yield selenocysteine, ammonia and 2-oxobutanoate (By similarity).</text>
</comment>
<comment type="catalytic activity">
    <reaction evidence="3 4 8 10">
        <text>L,L-cystathionine + H2O = 2-oxobutanoate + L-cysteine + NH4(+)</text>
        <dbReference type="Rhea" id="RHEA:14005"/>
        <dbReference type="ChEBI" id="CHEBI:15377"/>
        <dbReference type="ChEBI" id="CHEBI:16763"/>
        <dbReference type="ChEBI" id="CHEBI:28938"/>
        <dbReference type="ChEBI" id="CHEBI:35235"/>
        <dbReference type="ChEBI" id="CHEBI:58161"/>
        <dbReference type="EC" id="4.4.1.1"/>
    </reaction>
    <physiologicalReaction direction="left-to-right" evidence="26 27 28 30">
        <dbReference type="Rhea" id="RHEA:14006"/>
    </physiologicalReaction>
</comment>
<comment type="catalytic activity">
    <reaction evidence="3 8 9 10 11">
        <text>L-cysteine + H2O = hydrogen sulfide + pyruvate + NH4(+) + H(+)</text>
        <dbReference type="Rhea" id="RHEA:24931"/>
        <dbReference type="ChEBI" id="CHEBI:15361"/>
        <dbReference type="ChEBI" id="CHEBI:15377"/>
        <dbReference type="ChEBI" id="CHEBI:15378"/>
        <dbReference type="ChEBI" id="CHEBI:28938"/>
        <dbReference type="ChEBI" id="CHEBI:29919"/>
        <dbReference type="ChEBI" id="CHEBI:35235"/>
        <dbReference type="EC" id="4.4.1.1"/>
    </reaction>
    <physiologicalReaction direction="left-to-right" evidence="11 26 28 29 30">
        <dbReference type="Rhea" id="RHEA:24932"/>
    </physiologicalReaction>
</comment>
<comment type="catalytic activity">
    <reaction evidence="8 10">
        <text>L-homocysteine + H2O = 2-oxobutanoate + hydrogen sulfide + NH4(+) + H(+)</text>
        <dbReference type="Rhea" id="RHEA:14501"/>
        <dbReference type="ChEBI" id="CHEBI:15377"/>
        <dbReference type="ChEBI" id="CHEBI:15378"/>
        <dbReference type="ChEBI" id="CHEBI:16763"/>
        <dbReference type="ChEBI" id="CHEBI:28938"/>
        <dbReference type="ChEBI" id="CHEBI:29919"/>
        <dbReference type="ChEBI" id="CHEBI:58199"/>
        <dbReference type="EC" id="4.4.1.2"/>
    </reaction>
    <physiologicalReaction direction="left-to-right" evidence="28 30">
        <dbReference type="Rhea" id="RHEA:14502"/>
    </physiologicalReaction>
</comment>
<comment type="catalytic activity">
    <reaction evidence="1">
        <text>L-homoserine = 2-oxobutanoate + NH4(+)</text>
        <dbReference type="Rhea" id="RHEA:24923"/>
        <dbReference type="ChEBI" id="CHEBI:16763"/>
        <dbReference type="ChEBI" id="CHEBI:28938"/>
        <dbReference type="ChEBI" id="CHEBI:57476"/>
        <dbReference type="EC" id="4.4.1.1"/>
    </reaction>
    <physiologicalReaction direction="left-to-right" evidence="1">
        <dbReference type="Rhea" id="RHEA:24924"/>
    </physiologicalReaction>
</comment>
<comment type="catalytic activity">
    <reaction evidence="1">
        <text>L-selenocystathionine + H2O = L-selenocysteine + 2-oxobutanoate + NH4(+)</text>
        <dbReference type="Rhea" id="RHEA:31151"/>
        <dbReference type="ChEBI" id="CHEBI:15377"/>
        <dbReference type="ChEBI" id="CHEBI:16763"/>
        <dbReference type="ChEBI" id="CHEBI:28938"/>
        <dbReference type="ChEBI" id="CHEBI:57843"/>
        <dbReference type="ChEBI" id="CHEBI:62226"/>
    </reaction>
    <physiologicalReaction direction="left-to-right" evidence="1">
        <dbReference type="Rhea" id="RHEA:31152"/>
    </physiologicalReaction>
</comment>
<comment type="cofactor">
    <cofactor evidence="3 8 9 11">
        <name>pyridoxal 5'-phosphate</name>
        <dbReference type="ChEBI" id="CHEBI:597326"/>
    </cofactor>
</comment>
<comment type="activity regulation">
    <text evidence="3 9">Inhibited by propargylglycine, trifluoroalanine and aminoethoxyvinylglycine.</text>
</comment>
<comment type="biophysicochemical properties">
    <kinetics>
        <KM evidence="3">0.5 mM for L,L-cystathionine</KM>
        <KM evidence="10">0.3 mM for L,L-cystathionine</KM>
        <KM evidence="10">2.7 mM for L-homocysteine</KM>
        <KM evidence="10">3.7 mM for L-cysteine</KM>
        <KM evidence="9">2.75 mM for L-cysteine</KM>
        <KM evidence="8">0.4 mM for L,L-cystathionine</KM>
        <KM evidence="8">5.4 mM for L-homocysteine</KM>
        <KM evidence="8">3.5 mM for L-cysteine</KM>
        <Vmax evidence="3">2.5 umol/min/mg enzyme with L,L-cystathionine as substrate</Vmax>
        <Vmax evidence="10">3.1 umol/min/mg enzyme with L,L-cystathionine as substrate</Vmax>
        <Vmax evidence="8">2.3 umol/min/mg enzyme with L,L-cystathionine as substrate</Vmax>
        <Vmax evidence="8">4.7 umol/min/mg enzyme with L-homocysteine as substrate</Vmax>
        <Vmax evidence="8">0.9 umol/min/mg enzyme with L-cysteine as substrate</Vmax>
        <Vmax evidence="9">0.14 umol/min/mg enzyme with L-cysteine as substrate</Vmax>
    </kinetics>
    <phDependence>
        <text evidence="3 8">Optimum pH is 8.2 with L,L-cystathionine.</text>
    </phDependence>
</comment>
<comment type="pathway">
    <text evidence="26 28 30">Amino-acid biosynthesis; L-cysteine biosynthesis; L-cysteine from L-homocysteine and L-serine: step 2/2.</text>
</comment>
<comment type="subunit">
    <text evidence="2 9">Homotetramer (PubMed:19019829). Interacts with CALM in a calcium-dependent manner (By similarity).</text>
</comment>
<comment type="interaction">
    <interactant intactId="EBI-749763">
        <id>P32929</id>
    </interactant>
    <interactant intactId="EBI-749763">
        <id>P32929</id>
        <label>CTH</label>
    </interactant>
    <organismsDiffer>false</organismsDiffer>
    <experiments>7</experiments>
</comment>
<comment type="interaction">
    <interactant intactId="EBI-749763">
        <id>P32929</id>
    </interactant>
    <interactant intactId="EBI-8293751">
        <id>Q96NT3</id>
        <label>GUCD1</label>
    </interactant>
    <organismsDiffer>false</organismsDiffer>
    <experiments>3</experiments>
</comment>
<comment type="interaction">
    <interactant intactId="EBI-749763">
        <id>P32929</id>
    </interactant>
    <interactant intactId="EBI-11978177">
        <id>Q96NT3-2</id>
        <label>GUCD1</label>
    </interactant>
    <organismsDiffer>false</organismsDiffer>
    <experiments>3</experiments>
</comment>
<comment type="interaction">
    <interactant intactId="EBI-749763">
        <id>P32929</id>
    </interactant>
    <interactant intactId="EBI-741158">
        <id>Q96HA8</id>
        <label>NTAQ1</label>
    </interactant>
    <organismsDiffer>false</organismsDiffer>
    <experiments>3</experiments>
</comment>
<comment type="interaction">
    <interactant intactId="EBI-749763">
        <id>P32929</id>
    </interactant>
    <interactant intactId="EBI-10253121">
        <id>Q6P9E2</id>
        <label>RECK</label>
    </interactant>
    <organismsDiffer>false</organismsDiffer>
    <experiments>6</experiments>
</comment>
<comment type="subcellular location">
    <subcellularLocation>
        <location>Cytoplasm</location>
    </subcellularLocation>
</comment>
<comment type="alternative products">
    <event type="alternative splicing"/>
    <isoform>
        <id>P32929-1</id>
        <name>1</name>
        <sequence type="displayed"/>
    </isoform>
    <isoform>
        <id>P32929-2</id>
        <name>2</name>
        <sequence type="described" ref="VSP_006306"/>
    </isoform>
    <isoform>
        <id>P32929-3</id>
        <name>3</name>
        <sequence type="described" ref="VSP_047274"/>
    </isoform>
</comment>
<comment type="tissue specificity">
    <text evidence="4 12">Highly expressed in liver (PubMed:10727430, PubMed:20305127). Also in muscle and lower expression in most tissues except heart, pituitary gland, spleen, thymus, and vascular tissue, where it is hardly detected (PubMed:20305127).</text>
</comment>
<comment type="developmental stage">
    <text evidence="4">mRNA is detected from the 19th gestational week onwards at levels comparable with those of adult liver.</text>
</comment>
<comment type="induction">
    <text evidence="14">Estrogen receptor alpha (ESR1) regulates CSE promoter activity and induces protein expression in human osteoblasts.</text>
</comment>
<comment type="disease" evidence="5 8">
    <disease id="DI-01465">
        <name>Cystathioninuria</name>
        <acronym>CSTNU</acronym>
        <description>Autosomal recessive phenotype characterized by abnormal accumulation of plasma cystathionine, leading to increased urinary excretion.</description>
        <dbReference type="MIM" id="219500"/>
    </disease>
    <text>The disease is caused by variants affecting the gene represented in this entry.</text>
</comment>
<comment type="similarity">
    <text evidence="25">Belongs to the trans-sulfuration enzymes family.</text>
</comment>
<name>CGL_HUMAN</name>
<evidence type="ECO:0000250" key="1">
    <source>
        <dbReference type="UniProtKB" id="P18757"/>
    </source>
</evidence>
<evidence type="ECO:0000250" key="2">
    <source>
        <dbReference type="UniProtKB" id="Q8VCN5"/>
    </source>
</evidence>
<evidence type="ECO:0000269" key="3">
    <source>
    </source>
</evidence>
<evidence type="ECO:0000269" key="4">
    <source>
    </source>
</evidence>
<evidence type="ECO:0000269" key="5">
    <source>
    </source>
</evidence>
<evidence type="ECO:0000269" key="6">
    <source>
    </source>
</evidence>
<evidence type="ECO:0000269" key="7">
    <source>
    </source>
</evidence>
<evidence type="ECO:0000269" key="8">
    <source>
    </source>
</evidence>
<evidence type="ECO:0000269" key="9">
    <source>
    </source>
</evidence>
<evidence type="ECO:0000269" key="10">
    <source>
    </source>
</evidence>
<evidence type="ECO:0000269" key="11">
    <source>
    </source>
</evidence>
<evidence type="ECO:0000269" key="12">
    <source>
    </source>
</evidence>
<evidence type="ECO:0000269" key="13">
    <source>
    </source>
</evidence>
<evidence type="ECO:0000269" key="14">
    <source>
    </source>
</evidence>
<evidence type="ECO:0000269" key="15">
    <source ref="4"/>
</evidence>
<evidence type="ECO:0000303" key="16">
    <source>
    </source>
</evidence>
<evidence type="ECO:0000303" key="17">
    <source>
    </source>
</evidence>
<evidence type="ECO:0000303" key="18">
    <source>
    </source>
</evidence>
<evidence type="ECO:0000303" key="19">
    <source>
    </source>
</evidence>
<evidence type="ECO:0000303" key="20">
    <source>
    </source>
</evidence>
<evidence type="ECO:0000303" key="21">
    <source>
    </source>
</evidence>
<evidence type="ECO:0000303" key="22">
    <source>
    </source>
</evidence>
<evidence type="ECO:0000303" key="23">
    <source>
    </source>
</evidence>
<evidence type="ECO:0000303" key="24">
    <source>
    </source>
</evidence>
<evidence type="ECO:0000305" key="25"/>
<evidence type="ECO:0000305" key="26">
    <source>
    </source>
</evidence>
<evidence type="ECO:0000305" key="27">
    <source>
    </source>
</evidence>
<evidence type="ECO:0000305" key="28">
    <source>
    </source>
</evidence>
<evidence type="ECO:0000305" key="29">
    <source>
    </source>
</evidence>
<evidence type="ECO:0000305" key="30">
    <source>
    </source>
</evidence>
<evidence type="ECO:0007829" key="31">
    <source>
        <dbReference type="PDB" id="3COG"/>
    </source>
</evidence>
<evidence type="ECO:0007829" key="32">
    <source>
        <dbReference type="PDB" id="5TSU"/>
    </source>
</evidence>
<dbReference type="EC" id="4.4.1.1" evidence="3 4 8 10 11"/>
<dbReference type="EC" id="4.4.1.2" evidence="8 10"/>
<dbReference type="EMBL" id="S52784">
    <property type="protein sequence ID" value="AAB24700.1"/>
    <property type="molecule type" value="mRNA"/>
</dbReference>
<dbReference type="EMBL" id="S52028">
    <property type="protein sequence ID" value="AAB24699.1"/>
    <property type="molecule type" value="mRNA"/>
</dbReference>
<dbReference type="EMBL" id="BT006882">
    <property type="protein sequence ID" value="AAP35528.1"/>
    <property type="molecule type" value="mRNA"/>
</dbReference>
<dbReference type="EMBL" id="AK303946">
    <property type="protein sequence ID" value="BAG64874.1"/>
    <property type="molecule type" value="mRNA"/>
</dbReference>
<dbReference type="EMBL" id="AK223376">
    <property type="protein sequence ID" value="BAD97096.1"/>
    <property type="molecule type" value="mRNA"/>
</dbReference>
<dbReference type="EMBL" id="AL354872">
    <property type="status" value="NOT_ANNOTATED_CDS"/>
    <property type="molecule type" value="Genomic_DNA"/>
</dbReference>
<dbReference type="EMBL" id="CH471059">
    <property type="protein sequence ID" value="EAX06450.1"/>
    <property type="molecule type" value="Genomic_DNA"/>
</dbReference>
<dbReference type="EMBL" id="BC015807">
    <property type="protein sequence ID" value="AAH15807.1"/>
    <property type="molecule type" value="mRNA"/>
</dbReference>
<dbReference type="CCDS" id="CCDS53333.1">
    <molecule id="P32929-3"/>
</dbReference>
<dbReference type="CCDS" id="CCDS650.1">
    <molecule id="P32929-1"/>
</dbReference>
<dbReference type="CCDS" id="CCDS651.1">
    <molecule id="P32929-2"/>
</dbReference>
<dbReference type="PIR" id="JC1362">
    <property type="entry name" value="JC1362"/>
</dbReference>
<dbReference type="RefSeq" id="NP_001177392.1">
    <molecule id="P32929-3"/>
    <property type="nucleotide sequence ID" value="NM_001190463.2"/>
</dbReference>
<dbReference type="RefSeq" id="NP_001893.2">
    <molecule id="P32929-1"/>
    <property type="nucleotide sequence ID" value="NM_001902.5"/>
</dbReference>
<dbReference type="RefSeq" id="NP_714964.2">
    <molecule id="P32929-2"/>
    <property type="nucleotide sequence ID" value="NM_153742.4"/>
</dbReference>
<dbReference type="PDB" id="2NMP">
    <property type="method" value="X-ray"/>
    <property type="resolution" value="2.60 A"/>
    <property type="chains" value="A/B/C/D=1-402"/>
</dbReference>
<dbReference type="PDB" id="3COG">
    <property type="method" value="X-ray"/>
    <property type="resolution" value="2.00 A"/>
    <property type="chains" value="A/B/C/D=1-402"/>
</dbReference>
<dbReference type="PDB" id="3ELP">
    <property type="method" value="X-ray"/>
    <property type="resolution" value="2.40 A"/>
    <property type="chains" value="A/B/C/D=1-405"/>
</dbReference>
<dbReference type="PDB" id="5EIG">
    <property type="method" value="X-ray"/>
    <property type="resolution" value="2.70 A"/>
    <property type="chains" value="A/B/C/D/E/F/G/H=1-405"/>
</dbReference>
<dbReference type="PDB" id="5TSU">
    <property type="method" value="X-ray"/>
    <property type="resolution" value="2.20 A"/>
    <property type="chains" value="A/B/C/D/E/F/G/H=2-405"/>
</dbReference>
<dbReference type="PDB" id="5TT2">
    <property type="method" value="X-ray"/>
    <property type="resolution" value="2.95 A"/>
    <property type="chains" value="C/D=2-405"/>
</dbReference>
<dbReference type="PDB" id="6NBA">
    <property type="method" value="X-ray"/>
    <property type="resolution" value="2.50 A"/>
    <property type="chains" value="A/B/C/D=1-402"/>
</dbReference>
<dbReference type="PDB" id="6OVG">
    <property type="method" value="X-ray"/>
    <property type="resolution" value="2.72 A"/>
    <property type="chains" value="A/B/C/D/E/F/G/H=2-405"/>
</dbReference>
<dbReference type="PDBsum" id="2NMP"/>
<dbReference type="PDBsum" id="3COG"/>
<dbReference type="PDBsum" id="3ELP"/>
<dbReference type="PDBsum" id="5EIG"/>
<dbReference type="PDBsum" id="5TSU"/>
<dbReference type="PDBsum" id="5TT2"/>
<dbReference type="PDBsum" id="6NBA"/>
<dbReference type="PDBsum" id="6OVG"/>
<dbReference type="SMR" id="P32929"/>
<dbReference type="BioGRID" id="107873">
    <property type="interactions" value="71"/>
</dbReference>
<dbReference type="FunCoup" id="P32929">
    <property type="interactions" value="1008"/>
</dbReference>
<dbReference type="IntAct" id="P32929">
    <property type="interactions" value="30"/>
</dbReference>
<dbReference type="MINT" id="P32929"/>
<dbReference type="STRING" id="9606.ENSP00000359976"/>
<dbReference type="BindingDB" id="P32929"/>
<dbReference type="ChEMBL" id="CHEMBL4295745"/>
<dbReference type="DrugBank" id="DB02328">
    <property type="generic name" value="2-[(3-Hydroxy-2-Methyl-5-Phosphonooxymethyl-Pyridin-4-Ylmethyl)-Imino]-5-Phosphono-Pent-3-Enoic Acid"/>
</dbReference>
<dbReference type="DrugBank" id="DB03928">
    <property type="generic name" value="Carboxymethylthio-3-(3-Chlorophenyl)-1,2,4-Oxadiazol"/>
</dbReference>
<dbReference type="DrugBank" id="DB00151">
    <property type="generic name" value="Cysteine"/>
</dbReference>
<dbReference type="DrugBank" id="DB04217">
    <property type="generic name" value="L-2-amino-3-butynoic acid"/>
</dbReference>
<dbReference type="DrugBank" id="DB00114">
    <property type="generic name" value="Pyridoxal phosphate"/>
</dbReference>
<dbReference type="DrugCentral" id="P32929"/>
<dbReference type="GuidetoPHARMACOLOGY" id="1444"/>
<dbReference type="GlyGen" id="P32929">
    <property type="glycosylation" value="1 site, 1 O-linked glycan (1 site)"/>
</dbReference>
<dbReference type="iPTMnet" id="P32929"/>
<dbReference type="PhosphoSitePlus" id="P32929"/>
<dbReference type="SwissPalm" id="P32929"/>
<dbReference type="BioMuta" id="CTH"/>
<dbReference type="DMDM" id="27735163"/>
<dbReference type="jPOST" id="P32929"/>
<dbReference type="MassIVE" id="P32929"/>
<dbReference type="PaxDb" id="9606-ENSP00000359976"/>
<dbReference type="PeptideAtlas" id="P32929"/>
<dbReference type="ProteomicsDB" id="19753"/>
<dbReference type="ProteomicsDB" id="54890">
    <molecule id="P32929-1"/>
</dbReference>
<dbReference type="ProteomicsDB" id="54891">
    <molecule id="P32929-2"/>
</dbReference>
<dbReference type="Pumba" id="P32929"/>
<dbReference type="Antibodypedia" id="19668">
    <property type="antibodies" value="422 antibodies from 34 providers"/>
</dbReference>
<dbReference type="DNASU" id="1491"/>
<dbReference type="Ensembl" id="ENST00000346806.2">
    <molecule id="P32929-2"/>
    <property type="protein sequence ID" value="ENSP00000311554.2"/>
    <property type="gene ID" value="ENSG00000116761.12"/>
</dbReference>
<dbReference type="Ensembl" id="ENST00000370938.8">
    <molecule id="P32929-1"/>
    <property type="protein sequence ID" value="ENSP00000359976.3"/>
    <property type="gene ID" value="ENSG00000116761.12"/>
</dbReference>
<dbReference type="Ensembl" id="ENST00000411986.6">
    <molecule id="P32929-3"/>
    <property type="protein sequence ID" value="ENSP00000413407.2"/>
    <property type="gene ID" value="ENSG00000116761.12"/>
</dbReference>
<dbReference type="GeneID" id="1491"/>
<dbReference type="KEGG" id="hsa:1491"/>
<dbReference type="MANE-Select" id="ENST00000370938.8">
    <property type="protein sequence ID" value="ENSP00000359976.3"/>
    <property type="RefSeq nucleotide sequence ID" value="NM_001902.6"/>
    <property type="RefSeq protein sequence ID" value="NP_001893.2"/>
</dbReference>
<dbReference type="UCSC" id="uc001dfd.4">
    <molecule id="P32929-1"/>
    <property type="organism name" value="human"/>
</dbReference>
<dbReference type="AGR" id="HGNC:2501"/>
<dbReference type="CTD" id="1491"/>
<dbReference type="DisGeNET" id="1491"/>
<dbReference type="GeneCards" id="CTH"/>
<dbReference type="HGNC" id="HGNC:2501">
    <property type="gene designation" value="CTH"/>
</dbReference>
<dbReference type="HPA" id="ENSG00000116761">
    <property type="expression patterns" value="Group enriched (liver, ovary)"/>
</dbReference>
<dbReference type="MalaCards" id="CTH"/>
<dbReference type="MIM" id="219500">
    <property type="type" value="phenotype"/>
</dbReference>
<dbReference type="MIM" id="607657">
    <property type="type" value="gene"/>
</dbReference>
<dbReference type="neXtProt" id="NX_P32929"/>
<dbReference type="OpenTargets" id="ENSG00000116761"/>
<dbReference type="Orphanet" id="212">
    <property type="disease" value="Cystathioninuria"/>
</dbReference>
<dbReference type="PharmGKB" id="PA27004"/>
<dbReference type="VEuPathDB" id="HostDB:ENSG00000116761"/>
<dbReference type="eggNOG" id="KOG0053">
    <property type="taxonomic scope" value="Eukaryota"/>
</dbReference>
<dbReference type="GeneTree" id="ENSGT00390000000312"/>
<dbReference type="HOGENOM" id="CLU_018986_2_3_1"/>
<dbReference type="InParanoid" id="P32929"/>
<dbReference type="OMA" id="YKQDGVG"/>
<dbReference type="OrthoDB" id="3512640at2759"/>
<dbReference type="PAN-GO" id="P32929">
    <property type="GO annotations" value="5 GO annotations based on evolutionary models"/>
</dbReference>
<dbReference type="PhylomeDB" id="P32929"/>
<dbReference type="TreeFam" id="TF300720"/>
<dbReference type="BioCyc" id="MetaCyc:HS04050-MONOMER"/>
<dbReference type="BRENDA" id="4.4.1.1">
    <property type="organism ID" value="2681"/>
</dbReference>
<dbReference type="PathwayCommons" id="P32929"/>
<dbReference type="Reactome" id="R-HSA-1614558">
    <property type="pathway name" value="Degradation of cysteine and homocysteine"/>
</dbReference>
<dbReference type="Reactome" id="R-HSA-1614603">
    <property type="pathway name" value="Cysteine formation from homocysteine"/>
</dbReference>
<dbReference type="Reactome" id="R-HSA-2408508">
    <property type="pathway name" value="Metabolism of ingested SeMet, Sec, MeSec into H2Se"/>
</dbReference>
<dbReference type="SABIO-RK" id="P32929"/>
<dbReference type="SignaLink" id="P32929"/>
<dbReference type="SIGNOR" id="P32929"/>
<dbReference type="UniPathway" id="UPA00136">
    <property type="reaction ID" value="UER00202"/>
</dbReference>
<dbReference type="BioGRID-ORCS" id="1491">
    <property type="hits" value="15 hits in 1170 CRISPR screens"/>
</dbReference>
<dbReference type="ChiTaRS" id="CTH">
    <property type="organism name" value="human"/>
</dbReference>
<dbReference type="EvolutionaryTrace" id="P32929"/>
<dbReference type="GenomeRNAi" id="1491"/>
<dbReference type="Pharos" id="P32929">
    <property type="development level" value="Tchem"/>
</dbReference>
<dbReference type="PRO" id="PR:P32929"/>
<dbReference type="Proteomes" id="UP000005640">
    <property type="component" value="Chromosome 1"/>
</dbReference>
<dbReference type="RNAct" id="P32929">
    <property type="molecule type" value="protein"/>
</dbReference>
<dbReference type="Bgee" id="ENSG00000116761">
    <property type="expression patterns" value="Expressed in right lobe of liver and 165 other cell types or tissues"/>
</dbReference>
<dbReference type="GO" id="GO:0005737">
    <property type="term" value="C:cytoplasm"/>
    <property type="evidence" value="ECO:0000318"/>
    <property type="project" value="GO_Central"/>
</dbReference>
<dbReference type="GO" id="GO:0005829">
    <property type="term" value="C:cytosol"/>
    <property type="evidence" value="ECO:0000304"/>
    <property type="project" value="Reactome"/>
</dbReference>
<dbReference type="GO" id="GO:0070062">
    <property type="term" value="C:extracellular exosome"/>
    <property type="evidence" value="ECO:0007005"/>
    <property type="project" value="UniProtKB"/>
</dbReference>
<dbReference type="GO" id="GO:0005516">
    <property type="term" value="F:calmodulin binding"/>
    <property type="evidence" value="ECO:0007669"/>
    <property type="project" value="UniProtKB-KW"/>
</dbReference>
<dbReference type="GO" id="GO:0004123">
    <property type="term" value="F:cystathionine gamma-lyase activity"/>
    <property type="evidence" value="ECO:0000314"/>
    <property type="project" value="UniProtKB"/>
</dbReference>
<dbReference type="GO" id="GO:0047982">
    <property type="term" value="F:homocysteine desulfhydrase activity"/>
    <property type="evidence" value="ECO:0007669"/>
    <property type="project" value="RHEA"/>
</dbReference>
<dbReference type="GO" id="GO:0042802">
    <property type="term" value="F:identical protein binding"/>
    <property type="evidence" value="ECO:0000353"/>
    <property type="project" value="IntAct"/>
</dbReference>
<dbReference type="GO" id="GO:0080146">
    <property type="term" value="F:L-cysteine desulfhydrase activity"/>
    <property type="evidence" value="ECO:0007669"/>
    <property type="project" value="RHEA"/>
</dbReference>
<dbReference type="GO" id="GO:0044540">
    <property type="term" value="F:L-cystine L-cysteine-lyase (deaminating)"/>
    <property type="evidence" value="ECO:0000315"/>
    <property type="project" value="UniProtKB"/>
</dbReference>
<dbReference type="GO" id="GO:0030170">
    <property type="term" value="F:pyridoxal phosphate binding"/>
    <property type="evidence" value="ECO:0000314"/>
    <property type="project" value="UniProtKB"/>
</dbReference>
<dbReference type="GO" id="GO:0098606">
    <property type="term" value="F:selenocystathionine gamma-lyase activity"/>
    <property type="evidence" value="ECO:0007669"/>
    <property type="project" value="RHEA"/>
</dbReference>
<dbReference type="GO" id="GO:1990830">
    <property type="term" value="P:cellular response to leukemia inhibitory factor"/>
    <property type="evidence" value="ECO:0007669"/>
    <property type="project" value="Ensembl"/>
</dbReference>
<dbReference type="GO" id="GO:0019344">
    <property type="term" value="P:cysteine biosynthetic process"/>
    <property type="evidence" value="ECO:0000314"/>
    <property type="project" value="UniProtKB"/>
</dbReference>
<dbReference type="GO" id="GO:0019343">
    <property type="term" value="P:cysteine biosynthetic process via cystathionine"/>
    <property type="evidence" value="ECO:0000314"/>
    <property type="project" value="BHF-UCL"/>
</dbReference>
<dbReference type="GO" id="GO:0006534">
    <property type="term" value="P:cysteine metabolic process"/>
    <property type="evidence" value="ECO:0000304"/>
    <property type="project" value="ProtInc"/>
</dbReference>
<dbReference type="GO" id="GO:0030968">
    <property type="term" value="P:endoplasmic reticulum unfolded protein response"/>
    <property type="evidence" value="ECO:0000304"/>
    <property type="project" value="UniProtKB"/>
</dbReference>
<dbReference type="GO" id="GO:0070814">
    <property type="term" value="P:hydrogen sulfide biosynthetic process"/>
    <property type="evidence" value="ECO:0000314"/>
    <property type="project" value="UniProtKB"/>
</dbReference>
<dbReference type="GO" id="GO:0006629">
    <property type="term" value="P:lipid metabolic process"/>
    <property type="evidence" value="ECO:0007669"/>
    <property type="project" value="UniProtKB-KW"/>
</dbReference>
<dbReference type="GO" id="GO:2001234">
    <property type="term" value="P:negative regulation of apoptotic signaling pathway"/>
    <property type="evidence" value="ECO:0007669"/>
    <property type="project" value="Ensembl"/>
</dbReference>
<dbReference type="GO" id="GO:1904831">
    <property type="term" value="P:positive regulation of aortic smooth muscle cell differentiation"/>
    <property type="evidence" value="ECO:0000315"/>
    <property type="project" value="BHF-UCL"/>
</dbReference>
<dbReference type="GO" id="GO:0043123">
    <property type="term" value="P:positive regulation of canonical NF-kappaB signal transduction"/>
    <property type="evidence" value="ECO:0007669"/>
    <property type="project" value="Ensembl"/>
</dbReference>
<dbReference type="GO" id="GO:0051289">
    <property type="term" value="P:protein homotetramerization"/>
    <property type="evidence" value="ECO:0000353"/>
    <property type="project" value="UniProtKB"/>
</dbReference>
<dbReference type="GO" id="GO:0044524">
    <property type="term" value="P:protein sulfhydration"/>
    <property type="evidence" value="ECO:0000315"/>
    <property type="project" value="UniProtKB"/>
</dbReference>
<dbReference type="GO" id="GO:0018272">
    <property type="term" value="P:protein-pyridoxal-5-phosphate linkage via peptidyl-N6-pyridoxal phosphate-L-lysine"/>
    <property type="evidence" value="ECO:0000314"/>
    <property type="project" value="UniProtKB"/>
</dbReference>
<dbReference type="GO" id="GO:0019346">
    <property type="term" value="P:transsulfuration"/>
    <property type="evidence" value="ECO:0000314"/>
    <property type="project" value="BHF-UCL"/>
</dbReference>
<dbReference type="CDD" id="cd00614">
    <property type="entry name" value="CGS_like"/>
    <property type="match status" value="1"/>
</dbReference>
<dbReference type="FunFam" id="3.90.1150.10:FF:000008">
    <property type="entry name" value="Cystathionine gamma-synthase"/>
    <property type="match status" value="1"/>
</dbReference>
<dbReference type="FunFam" id="3.40.640.10:FF:000009">
    <property type="entry name" value="Cystathionine gamma-synthase homolog"/>
    <property type="match status" value="1"/>
</dbReference>
<dbReference type="Gene3D" id="3.90.1150.10">
    <property type="entry name" value="Aspartate Aminotransferase, domain 1"/>
    <property type="match status" value="1"/>
</dbReference>
<dbReference type="Gene3D" id="3.40.640.10">
    <property type="entry name" value="Type I PLP-dependent aspartate aminotransferase-like (Major domain)"/>
    <property type="match status" value="1"/>
</dbReference>
<dbReference type="InterPro" id="IPR000277">
    <property type="entry name" value="Cys/Met-Metab_PyrdxlP-dep_enz"/>
</dbReference>
<dbReference type="InterPro" id="IPR054542">
    <property type="entry name" value="Cys_met_metab_PP"/>
</dbReference>
<dbReference type="InterPro" id="IPR015424">
    <property type="entry name" value="PyrdxlP-dep_Trfase"/>
</dbReference>
<dbReference type="InterPro" id="IPR015421">
    <property type="entry name" value="PyrdxlP-dep_Trfase_major"/>
</dbReference>
<dbReference type="InterPro" id="IPR015422">
    <property type="entry name" value="PyrdxlP-dep_Trfase_small"/>
</dbReference>
<dbReference type="PANTHER" id="PTHR11808:SF15">
    <property type="entry name" value="CYSTATHIONINE GAMMA-LYASE"/>
    <property type="match status" value="1"/>
</dbReference>
<dbReference type="PANTHER" id="PTHR11808">
    <property type="entry name" value="TRANS-SULFURATION ENZYME FAMILY MEMBER"/>
    <property type="match status" value="1"/>
</dbReference>
<dbReference type="Pfam" id="PF01053">
    <property type="entry name" value="Cys_Met_Meta_PP"/>
    <property type="match status" value="1"/>
</dbReference>
<dbReference type="PIRSF" id="PIRSF001434">
    <property type="entry name" value="CGS"/>
    <property type="match status" value="1"/>
</dbReference>
<dbReference type="SUPFAM" id="SSF53383">
    <property type="entry name" value="PLP-dependent transferases"/>
    <property type="match status" value="1"/>
</dbReference>
<dbReference type="PROSITE" id="PS00868">
    <property type="entry name" value="CYS_MET_METAB_PP"/>
    <property type="match status" value="1"/>
</dbReference>
<reference key="1">
    <citation type="journal article" date="1992" name="Biochem. Biophys. Res. Commun.">
        <title>Cloning and nucleotide sequence of human liver cDNA encoding for cystathionine gamma-lyase.</title>
        <authorList>
            <person name="Lu Y."/>
            <person name="O'Dowd B.F."/>
            <person name="Orrego H."/>
            <person name="Israel Y."/>
        </authorList>
    </citation>
    <scope>NUCLEOTIDE SEQUENCE [MRNA] (ISOFORMS 1 AND 2)</scope>
    <scope>VARIANT ILE-403</scope>
    <source>
        <tissue>Liver</tissue>
    </source>
</reference>
<reference key="2">
    <citation type="submission" date="2003-05" db="EMBL/GenBank/DDBJ databases">
        <title>Cloning of human full-length CDSs in BD Creator(TM) system donor vector.</title>
        <authorList>
            <person name="Kalnine N."/>
            <person name="Chen X."/>
            <person name="Rolfs A."/>
            <person name="Halleck A."/>
            <person name="Hines L."/>
            <person name="Eisenstein S."/>
            <person name="Koundinya M."/>
            <person name="Raphael J."/>
            <person name="Moreira D."/>
            <person name="Kelley T."/>
            <person name="LaBaer J."/>
            <person name="Lin Y."/>
            <person name="Phelan M."/>
            <person name="Farmer A."/>
        </authorList>
    </citation>
    <scope>NUCLEOTIDE SEQUENCE [LARGE SCALE MRNA] (ISOFORM 1)</scope>
</reference>
<reference key="3">
    <citation type="journal article" date="2004" name="Nat. Genet.">
        <title>Complete sequencing and characterization of 21,243 full-length human cDNAs.</title>
        <authorList>
            <person name="Ota T."/>
            <person name="Suzuki Y."/>
            <person name="Nishikawa T."/>
            <person name="Otsuki T."/>
            <person name="Sugiyama T."/>
            <person name="Irie R."/>
            <person name="Wakamatsu A."/>
            <person name="Hayashi K."/>
            <person name="Sato H."/>
            <person name="Nagai K."/>
            <person name="Kimura K."/>
            <person name="Makita H."/>
            <person name="Sekine M."/>
            <person name="Obayashi M."/>
            <person name="Nishi T."/>
            <person name="Shibahara T."/>
            <person name="Tanaka T."/>
            <person name="Ishii S."/>
            <person name="Yamamoto J."/>
            <person name="Saito K."/>
            <person name="Kawai Y."/>
            <person name="Isono Y."/>
            <person name="Nakamura Y."/>
            <person name="Nagahari K."/>
            <person name="Murakami K."/>
            <person name="Yasuda T."/>
            <person name="Iwayanagi T."/>
            <person name="Wagatsuma M."/>
            <person name="Shiratori A."/>
            <person name="Sudo H."/>
            <person name="Hosoiri T."/>
            <person name="Kaku Y."/>
            <person name="Kodaira H."/>
            <person name="Kondo H."/>
            <person name="Sugawara M."/>
            <person name="Takahashi M."/>
            <person name="Kanda K."/>
            <person name="Yokoi T."/>
            <person name="Furuya T."/>
            <person name="Kikkawa E."/>
            <person name="Omura Y."/>
            <person name="Abe K."/>
            <person name="Kamihara K."/>
            <person name="Katsuta N."/>
            <person name="Sato K."/>
            <person name="Tanikawa M."/>
            <person name="Yamazaki M."/>
            <person name="Ninomiya K."/>
            <person name="Ishibashi T."/>
            <person name="Yamashita H."/>
            <person name="Murakawa K."/>
            <person name="Fujimori K."/>
            <person name="Tanai H."/>
            <person name="Kimata M."/>
            <person name="Watanabe M."/>
            <person name="Hiraoka S."/>
            <person name="Chiba Y."/>
            <person name="Ishida S."/>
            <person name="Ono Y."/>
            <person name="Takiguchi S."/>
            <person name="Watanabe S."/>
            <person name="Yosida M."/>
            <person name="Hotuta T."/>
            <person name="Kusano J."/>
            <person name="Kanehori K."/>
            <person name="Takahashi-Fujii A."/>
            <person name="Hara H."/>
            <person name="Tanase T.-O."/>
            <person name="Nomura Y."/>
            <person name="Togiya S."/>
            <person name="Komai F."/>
            <person name="Hara R."/>
            <person name="Takeuchi K."/>
            <person name="Arita M."/>
            <person name="Imose N."/>
            <person name="Musashino K."/>
            <person name="Yuuki H."/>
            <person name="Oshima A."/>
            <person name="Sasaki N."/>
            <person name="Aotsuka S."/>
            <person name="Yoshikawa Y."/>
            <person name="Matsunawa H."/>
            <person name="Ichihara T."/>
            <person name="Shiohata N."/>
            <person name="Sano S."/>
            <person name="Moriya S."/>
            <person name="Momiyama H."/>
            <person name="Satoh N."/>
            <person name="Takami S."/>
            <person name="Terashima Y."/>
            <person name="Suzuki O."/>
            <person name="Nakagawa S."/>
            <person name="Senoh A."/>
            <person name="Mizoguchi H."/>
            <person name="Goto Y."/>
            <person name="Shimizu F."/>
            <person name="Wakebe H."/>
            <person name="Hishigaki H."/>
            <person name="Watanabe T."/>
            <person name="Sugiyama A."/>
            <person name="Takemoto M."/>
            <person name="Kawakami B."/>
            <person name="Yamazaki M."/>
            <person name="Watanabe K."/>
            <person name="Kumagai A."/>
            <person name="Itakura S."/>
            <person name="Fukuzumi Y."/>
            <person name="Fujimori Y."/>
            <person name="Komiyama M."/>
            <person name="Tashiro H."/>
            <person name="Tanigami A."/>
            <person name="Fujiwara T."/>
            <person name="Ono T."/>
            <person name="Yamada K."/>
            <person name="Fujii Y."/>
            <person name="Ozaki K."/>
            <person name="Hirao M."/>
            <person name="Ohmori Y."/>
            <person name="Kawabata A."/>
            <person name="Hikiji T."/>
            <person name="Kobatake N."/>
            <person name="Inagaki H."/>
            <person name="Ikema Y."/>
            <person name="Okamoto S."/>
            <person name="Okitani R."/>
            <person name="Kawakami T."/>
            <person name="Noguchi S."/>
            <person name="Itoh T."/>
            <person name="Shigeta K."/>
            <person name="Senba T."/>
            <person name="Matsumura K."/>
            <person name="Nakajima Y."/>
            <person name="Mizuno T."/>
            <person name="Morinaga M."/>
            <person name="Sasaki M."/>
            <person name="Togashi T."/>
            <person name="Oyama M."/>
            <person name="Hata H."/>
            <person name="Watanabe M."/>
            <person name="Komatsu T."/>
            <person name="Mizushima-Sugano J."/>
            <person name="Satoh T."/>
            <person name="Shirai Y."/>
            <person name="Takahashi Y."/>
            <person name="Nakagawa K."/>
            <person name="Okumura K."/>
            <person name="Nagase T."/>
            <person name="Nomura N."/>
            <person name="Kikuchi H."/>
            <person name="Masuho Y."/>
            <person name="Yamashita R."/>
            <person name="Nakai K."/>
            <person name="Yada T."/>
            <person name="Nakamura Y."/>
            <person name="Ohara O."/>
            <person name="Isogai T."/>
            <person name="Sugano S."/>
        </authorList>
    </citation>
    <scope>NUCLEOTIDE SEQUENCE [LARGE SCALE MRNA] (ISOFORM 3)</scope>
    <scope>VARIANT ILE-403</scope>
    <source>
        <tissue>Trachea</tissue>
    </source>
</reference>
<reference key="4">
    <citation type="submission" date="2005-04" db="EMBL/GenBank/DDBJ databases">
        <authorList>
            <person name="Totoki Y."/>
            <person name="Toyoda A."/>
            <person name="Takeda T."/>
            <person name="Sakaki Y."/>
            <person name="Tanaka A."/>
            <person name="Yokoyama S."/>
        </authorList>
    </citation>
    <scope>NUCLEOTIDE SEQUENCE [LARGE SCALE MRNA] (ISOFORM 1)</scope>
    <scope>VARIANT ILE-403</scope>
    <source>
        <tissue>Kidney</tissue>
    </source>
</reference>
<reference key="5">
    <citation type="journal article" date="2006" name="Nature">
        <title>The DNA sequence and biological annotation of human chromosome 1.</title>
        <authorList>
            <person name="Gregory S.G."/>
            <person name="Barlow K.F."/>
            <person name="McLay K.E."/>
            <person name="Kaul R."/>
            <person name="Swarbreck D."/>
            <person name="Dunham A."/>
            <person name="Scott C.E."/>
            <person name="Howe K.L."/>
            <person name="Woodfine K."/>
            <person name="Spencer C.C.A."/>
            <person name="Jones M.C."/>
            <person name="Gillson C."/>
            <person name="Searle S."/>
            <person name="Zhou Y."/>
            <person name="Kokocinski F."/>
            <person name="McDonald L."/>
            <person name="Evans R."/>
            <person name="Phillips K."/>
            <person name="Atkinson A."/>
            <person name="Cooper R."/>
            <person name="Jones C."/>
            <person name="Hall R.E."/>
            <person name="Andrews T.D."/>
            <person name="Lloyd C."/>
            <person name="Ainscough R."/>
            <person name="Almeida J.P."/>
            <person name="Ambrose K.D."/>
            <person name="Anderson F."/>
            <person name="Andrew R.W."/>
            <person name="Ashwell R.I.S."/>
            <person name="Aubin K."/>
            <person name="Babbage A.K."/>
            <person name="Bagguley C.L."/>
            <person name="Bailey J."/>
            <person name="Beasley H."/>
            <person name="Bethel G."/>
            <person name="Bird C.P."/>
            <person name="Bray-Allen S."/>
            <person name="Brown J.Y."/>
            <person name="Brown A.J."/>
            <person name="Buckley D."/>
            <person name="Burton J."/>
            <person name="Bye J."/>
            <person name="Carder C."/>
            <person name="Chapman J.C."/>
            <person name="Clark S.Y."/>
            <person name="Clarke G."/>
            <person name="Clee C."/>
            <person name="Cobley V."/>
            <person name="Collier R.E."/>
            <person name="Corby N."/>
            <person name="Coville G.J."/>
            <person name="Davies J."/>
            <person name="Deadman R."/>
            <person name="Dunn M."/>
            <person name="Earthrowl M."/>
            <person name="Ellington A.G."/>
            <person name="Errington H."/>
            <person name="Frankish A."/>
            <person name="Frankland J."/>
            <person name="French L."/>
            <person name="Garner P."/>
            <person name="Garnett J."/>
            <person name="Gay L."/>
            <person name="Ghori M.R.J."/>
            <person name="Gibson R."/>
            <person name="Gilby L.M."/>
            <person name="Gillett W."/>
            <person name="Glithero R.J."/>
            <person name="Grafham D.V."/>
            <person name="Griffiths C."/>
            <person name="Griffiths-Jones S."/>
            <person name="Grocock R."/>
            <person name="Hammond S."/>
            <person name="Harrison E.S.I."/>
            <person name="Hart E."/>
            <person name="Haugen E."/>
            <person name="Heath P.D."/>
            <person name="Holmes S."/>
            <person name="Holt K."/>
            <person name="Howden P.J."/>
            <person name="Hunt A.R."/>
            <person name="Hunt S.E."/>
            <person name="Hunter G."/>
            <person name="Isherwood J."/>
            <person name="James R."/>
            <person name="Johnson C."/>
            <person name="Johnson D."/>
            <person name="Joy A."/>
            <person name="Kay M."/>
            <person name="Kershaw J.K."/>
            <person name="Kibukawa M."/>
            <person name="Kimberley A.M."/>
            <person name="King A."/>
            <person name="Knights A.J."/>
            <person name="Lad H."/>
            <person name="Laird G."/>
            <person name="Lawlor S."/>
            <person name="Leongamornlert D.A."/>
            <person name="Lloyd D.M."/>
            <person name="Loveland J."/>
            <person name="Lovell J."/>
            <person name="Lush M.J."/>
            <person name="Lyne R."/>
            <person name="Martin S."/>
            <person name="Mashreghi-Mohammadi M."/>
            <person name="Matthews L."/>
            <person name="Matthews N.S.W."/>
            <person name="McLaren S."/>
            <person name="Milne S."/>
            <person name="Mistry S."/>
            <person name="Moore M.J.F."/>
            <person name="Nickerson T."/>
            <person name="O'Dell C.N."/>
            <person name="Oliver K."/>
            <person name="Palmeiri A."/>
            <person name="Palmer S.A."/>
            <person name="Parker A."/>
            <person name="Patel D."/>
            <person name="Pearce A.V."/>
            <person name="Peck A.I."/>
            <person name="Pelan S."/>
            <person name="Phelps K."/>
            <person name="Phillimore B.J."/>
            <person name="Plumb R."/>
            <person name="Rajan J."/>
            <person name="Raymond C."/>
            <person name="Rouse G."/>
            <person name="Saenphimmachak C."/>
            <person name="Sehra H.K."/>
            <person name="Sheridan E."/>
            <person name="Shownkeen R."/>
            <person name="Sims S."/>
            <person name="Skuce C.D."/>
            <person name="Smith M."/>
            <person name="Steward C."/>
            <person name="Subramanian S."/>
            <person name="Sycamore N."/>
            <person name="Tracey A."/>
            <person name="Tromans A."/>
            <person name="Van Helmond Z."/>
            <person name="Wall M."/>
            <person name="Wallis J.M."/>
            <person name="White S."/>
            <person name="Whitehead S.L."/>
            <person name="Wilkinson J.E."/>
            <person name="Willey D.L."/>
            <person name="Williams H."/>
            <person name="Wilming L."/>
            <person name="Wray P.W."/>
            <person name="Wu Z."/>
            <person name="Coulson A."/>
            <person name="Vaudin M."/>
            <person name="Sulston J.E."/>
            <person name="Durbin R.M."/>
            <person name="Hubbard T."/>
            <person name="Wooster R."/>
            <person name="Dunham I."/>
            <person name="Carter N.P."/>
            <person name="McVean G."/>
            <person name="Ross M.T."/>
            <person name="Harrow J."/>
            <person name="Olson M.V."/>
            <person name="Beck S."/>
            <person name="Rogers J."/>
            <person name="Bentley D.R."/>
        </authorList>
    </citation>
    <scope>NUCLEOTIDE SEQUENCE [LARGE SCALE GENOMIC DNA]</scope>
</reference>
<reference key="6">
    <citation type="submission" date="2005-09" db="EMBL/GenBank/DDBJ databases">
        <authorList>
            <person name="Mural R.J."/>
            <person name="Istrail S."/>
            <person name="Sutton G.G."/>
            <person name="Florea L."/>
            <person name="Halpern A.L."/>
            <person name="Mobarry C.M."/>
            <person name="Lippert R."/>
            <person name="Walenz B."/>
            <person name="Shatkay H."/>
            <person name="Dew I."/>
            <person name="Miller J.R."/>
            <person name="Flanigan M.J."/>
            <person name="Edwards N.J."/>
            <person name="Bolanos R."/>
            <person name="Fasulo D."/>
            <person name="Halldorsson B.V."/>
            <person name="Hannenhalli S."/>
            <person name="Turner R."/>
            <person name="Yooseph S."/>
            <person name="Lu F."/>
            <person name="Nusskern D.R."/>
            <person name="Shue B.C."/>
            <person name="Zheng X.H."/>
            <person name="Zhong F."/>
            <person name="Delcher A.L."/>
            <person name="Huson D.H."/>
            <person name="Kravitz S.A."/>
            <person name="Mouchard L."/>
            <person name="Reinert K."/>
            <person name="Remington K.A."/>
            <person name="Clark A.G."/>
            <person name="Waterman M.S."/>
            <person name="Eichler E.E."/>
            <person name="Adams M.D."/>
            <person name="Hunkapiller M.W."/>
            <person name="Myers E.W."/>
            <person name="Venter J.C."/>
        </authorList>
    </citation>
    <scope>NUCLEOTIDE SEQUENCE [LARGE SCALE GENOMIC DNA]</scope>
</reference>
<reference key="7">
    <citation type="journal article" date="2004" name="Genome Res.">
        <title>The status, quality, and expansion of the NIH full-length cDNA project: the Mammalian Gene Collection (MGC).</title>
        <authorList>
            <consortium name="The MGC Project Team"/>
        </authorList>
    </citation>
    <scope>NUCLEOTIDE SEQUENCE [LARGE SCALE MRNA] (ISOFORM 1)</scope>
    <source>
        <tissue>Skin</tissue>
    </source>
</reference>
<reference key="8">
    <citation type="journal article" date="1999" name="J. Biol. Chem.">
        <title>Kinetics and inhibition of recombinant human cystathionine gamma-lyase. Toward the rational control of transsulfuration.</title>
        <authorList>
            <person name="Steegborn C."/>
            <person name="Clausen T."/>
            <person name="Sondermann P."/>
            <person name="Jacob U."/>
            <person name="Worbs M."/>
            <person name="Marinkovic S."/>
            <person name="Huber R."/>
            <person name="Wahl M.C."/>
        </authorList>
    </citation>
    <scope>CATALYTIC ACTIVITY</scope>
    <scope>FUNCTION</scope>
    <scope>SUBUNIT</scope>
    <scope>COFACTOR</scope>
    <scope>ACTIVITY REGULATION</scope>
    <scope>BIOPHYSICOCHEMICAL PROPERTIES</scope>
</reference>
<reference key="9">
    <citation type="journal article" date="2000" name="Biochem. J.">
        <title>Human cystathionine gamma-lyase: developmental and in vitro expression of two isoforms.</title>
        <authorList>
            <person name="Levonen A.L."/>
            <person name="Lapatto R."/>
            <person name="Saksela M."/>
            <person name="Raivio K.O."/>
        </authorList>
    </citation>
    <scope>CATALYTIC ACTIVITY</scope>
    <scope>TISSUE SPECIFICITY</scope>
    <scope>DEVELOPMENTAL STAGE</scope>
</reference>
<reference key="10">
    <citation type="journal article" date="2009" name="J. Biol. Chem.">
        <title>H2S biogenesis by human cystathionine gamma-lyase leads to the novel sulfur metabolites lanthionine and homolanthionine and is responsive to the grade of hyperhomocysteinemia.</title>
        <authorList>
            <person name="Chiku T."/>
            <person name="Padovani D."/>
            <person name="Zhu W."/>
            <person name="Singh S."/>
            <person name="Vitvitsky V."/>
            <person name="Banerjee R."/>
        </authorList>
    </citation>
    <scope>FUNCTION</scope>
    <scope>CATALYTIC ACTIVITY</scope>
    <scope>BIOPHYSICOCHEMICAL PROPERTIES</scope>
</reference>
<reference key="11">
    <citation type="journal article" date="2010" name="J. Mol. Biol.">
        <title>Site-directed mutagenesis on human cystathionine-gamma-lyase reveals insights into the modulation of H2S production.</title>
        <authorList>
            <person name="Huang S."/>
            <person name="Chua J.H."/>
            <person name="Yew W.S."/>
            <person name="Sivaraman J."/>
            <person name="Moore P.K."/>
            <person name="Tan C.H."/>
            <person name="Deng L.W."/>
        </authorList>
    </citation>
    <scope>FUNCTION</scope>
    <scope>CATALYTIC ACTIVITY</scope>
    <scope>COFACTOR</scope>
</reference>
<reference key="12">
    <citation type="journal article" date="2010" name="FASEB J.">
        <title>Regulation of homocysteine metabolism and methylation in human and mouse tissues.</title>
        <authorList>
            <person name="Chen N.C."/>
            <person name="Yang F."/>
            <person name="Capecci L.M."/>
            <person name="Gu Z."/>
            <person name="Schafer A.I."/>
            <person name="Durante W."/>
            <person name="Yang X.F."/>
            <person name="Wang H."/>
        </authorList>
    </citation>
    <scope>TISSUE SPECIFICITY</scope>
</reference>
<reference key="13">
    <citation type="journal article" date="2011" name="BMC Syst. Biol.">
        <title>Initial characterization of the human central proteome.</title>
        <authorList>
            <person name="Burkard T.R."/>
            <person name="Planyavsky M."/>
            <person name="Kaupe I."/>
            <person name="Breitwieser F.P."/>
            <person name="Buerckstuemmer T."/>
            <person name="Bennett K.L."/>
            <person name="Superti-Furga G."/>
            <person name="Colinge J."/>
        </authorList>
    </citation>
    <scope>IDENTIFICATION BY MASS SPECTROMETRY [LARGE SCALE ANALYSIS]</scope>
</reference>
<reference key="14">
    <citation type="journal article" date="2011" name="Sci. Signal.">
        <title>H2s-induced sulfhydration of the phosphatase PTP1B and its role in the endoplasmic reticulum stress response.</title>
        <authorList>
            <person name="Krishnan N."/>
            <person name="Fu C."/>
            <person name="Pappin D.J."/>
            <person name="Tonks N.K."/>
        </authorList>
    </citation>
    <scope>FUNCTION AS CYSTEINE-PROTEIN SULFHYDRASE</scope>
</reference>
<reference key="15">
    <citation type="journal article" date="2017" name="Oncotarget">
        <title>The expression of cystathionine gamma-lyase is regulated by estrogen receptor alpha in human osteoblasts.</title>
        <authorList>
            <person name="Lambertini E."/>
            <person name="Penolazzi L."/>
            <person name="Angelozzi M."/>
            <person name="Grassi F."/>
            <person name="Gambari L."/>
            <person name="Lisignoli G."/>
            <person name="De Bonis P."/>
            <person name="Cavallo M."/>
            <person name="Piva R."/>
        </authorList>
    </citation>
    <scope>FUNCTION</scope>
    <scope>INDUCTION BY ESTROGEN RECEPTOR ALPHA</scope>
</reference>
<reference key="16">
    <citation type="journal article" date="2014" name="J. Proteomics">
        <title>An enzyme assisted RP-RPLC approach for in-depth analysis of human liver phosphoproteome.</title>
        <authorList>
            <person name="Bian Y."/>
            <person name="Song C."/>
            <person name="Cheng K."/>
            <person name="Dong M."/>
            <person name="Wang F."/>
            <person name="Huang J."/>
            <person name="Sun D."/>
            <person name="Wang L."/>
            <person name="Ye M."/>
            <person name="Zou H."/>
        </authorList>
    </citation>
    <scope>IDENTIFICATION BY MASS SPECTROMETRY [LARGE SCALE ANALYSIS]</scope>
    <source>
        <tissue>Liver</tissue>
    </source>
</reference>
<reference key="17">
    <citation type="journal article" date="2009" name="J. Biol. Chem.">
        <title>Structural basis for the inhibition mechanism of human cystathionine gamma-lyase, an enzyme responsible for the production of H(2)S.</title>
        <authorList>
            <person name="Sun Q."/>
            <person name="Collins R."/>
            <person name="Huang S."/>
            <person name="Holmberg-Schiavone L."/>
            <person name="Anand G.S."/>
            <person name="Tan C.-H."/>
            <person name="van-den-Berg S."/>
            <person name="Deng L.-W."/>
            <person name="Moore P.K."/>
            <person name="Karlberg T."/>
            <person name="Sivaraman J."/>
        </authorList>
    </citation>
    <scope>X-RAY CRYSTALLOGRAPHY (2.0 ANGSTROMS) OF 1-402 IN COMPLEXES WITH PYRODOXAL PHOSPHATE; NITRATE AND PROPARGYLGLYCINE</scope>
    <scope>FUNCTION</scope>
    <scope>SUBUNIT</scope>
    <scope>ACTIVITY REGULATION</scope>
    <scope>CATALYTIC ACTIVITY</scope>
    <scope>COFACTOR</scope>
    <scope>BIOPHYSICOCHEMICAL PROPERTIES</scope>
</reference>
<reference key="18">
    <citation type="journal article" date="2003" name="Hum. Genet.">
        <title>Genomic basis of cystathioninuria (MIM 219500) revealed by multiple mutations in cystathionine gamma-lyase (CTH).</title>
        <authorList>
            <person name="Wang J."/>
            <person name="Hegele R.A."/>
        </authorList>
    </citation>
    <scope>VARIANTS CSTNU ILE-67 AND GLU-240</scope>
    <scope>VARIANT ILE-403</scope>
</reference>
<reference key="19">
    <citation type="journal article" date="2008" name="Biochemistry">
        <title>Kinetic properties of polymorphic variants and pathogenic mutants in human cystathionine gamma-lyase.</title>
        <authorList>
            <person name="Zhu W."/>
            <person name="Lin A."/>
            <person name="Banerjee R."/>
        </authorList>
    </citation>
    <scope>CHARACTERIZATION OF VARIANTS CSTNU ILE-67 AND GLU-240</scope>
    <scope>FUNCTION</scope>
    <scope>COFACTOR</scope>
    <scope>CATALYTIC ACTIVITY</scope>
    <scope>BIOPHYSICOCHEMICAL PROPERTIES</scope>
    <scope>SUBUNIT</scope>
</reference>
<gene>
    <name type="primary">CTH</name>
</gene>
<feature type="chain" id="PRO_0000114749" description="Cystathionine gamma-lyase">
    <location>
        <begin position="1"/>
        <end position="405"/>
    </location>
</feature>
<feature type="binding site">
    <location>
        <position position="62"/>
    </location>
    <ligand>
        <name>substrate</name>
    </ligand>
</feature>
<feature type="binding site">
    <location>
        <position position="114"/>
    </location>
    <ligand>
        <name>substrate</name>
    </ligand>
</feature>
<feature type="binding site">
    <location>
        <position position="119"/>
    </location>
    <ligand>
        <name>substrate</name>
    </ligand>
</feature>
<feature type="binding site">
    <location>
        <position position="339"/>
    </location>
    <ligand>
        <name>substrate</name>
    </ligand>
</feature>
<feature type="modified residue" description="N6-(pyridoxal phosphate)lysine" evidence="9">
    <location>
        <position position="212"/>
    </location>
</feature>
<feature type="splice variant" id="VSP_047274" description="In isoform 3." evidence="19">
    <location>
        <begin position="85"/>
        <end position="116"/>
    </location>
</feature>
<feature type="splice variant" id="VSP_006306" description="In isoform 2." evidence="18">
    <location>
        <begin position="153"/>
        <end position="196"/>
    </location>
</feature>
<feature type="sequence variant" id="VAR_015450" description="In CSTNU; reduces catalytic activity and affinity for pyridoxal phosphate; dbSNP:rs28941785." evidence="5 8">
    <original>T</original>
    <variation>I</variation>
    <location>
        <position position="67"/>
    </location>
</feature>
<feature type="sequence variant" id="VAR_015451" description="In CSTNU; strongly reduces catalytic activity and affinity for pyridoxal phosphate; dbSNP:rs28941786." evidence="5 8">
    <original>Q</original>
    <variation>E</variation>
    <location>
        <position position="240"/>
    </location>
</feature>
<feature type="sequence variant" id="VAR_015452" description="In dbSNP:rs1021737." evidence="5 6 7 15">
    <original>S</original>
    <variation>I</variation>
    <location>
        <position position="403"/>
    </location>
</feature>
<feature type="helix" evidence="31">
    <location>
        <begin position="18"/>
        <end position="24"/>
    </location>
</feature>
<feature type="helix" evidence="31">
    <location>
        <begin position="29"/>
        <end position="31"/>
    </location>
</feature>
<feature type="strand" evidence="31">
    <location>
        <begin position="36"/>
        <end position="38"/>
    </location>
</feature>
<feature type="strand" evidence="32">
    <location>
        <begin position="45"/>
        <end position="47"/>
    </location>
</feature>
<feature type="turn" evidence="31">
    <location>
        <begin position="61"/>
        <end position="63"/>
    </location>
</feature>
<feature type="helix" evidence="31">
    <location>
        <begin position="66"/>
        <end position="79"/>
    </location>
</feature>
<feature type="strand" evidence="31">
    <location>
        <begin position="82"/>
        <end position="88"/>
    </location>
</feature>
<feature type="helix" evidence="31">
    <location>
        <begin position="90"/>
        <end position="98"/>
    </location>
</feature>
<feature type="strand" evidence="31">
    <location>
        <begin position="106"/>
        <end position="112"/>
    </location>
</feature>
<feature type="helix" evidence="31">
    <location>
        <begin position="115"/>
        <end position="123"/>
    </location>
</feature>
<feature type="helix" evidence="31">
    <location>
        <begin position="125"/>
        <end position="128"/>
    </location>
</feature>
<feature type="strand" evidence="31">
    <location>
        <begin position="131"/>
        <end position="135"/>
    </location>
</feature>
<feature type="helix" evidence="31">
    <location>
        <begin position="140"/>
        <end position="146"/>
    </location>
</feature>
<feature type="strand" evidence="31">
    <location>
        <begin position="151"/>
        <end position="159"/>
    </location>
</feature>
<feature type="turn" evidence="31">
    <location>
        <begin position="161"/>
        <end position="163"/>
    </location>
</feature>
<feature type="helix" evidence="31">
    <location>
        <begin position="169"/>
        <end position="176"/>
    </location>
</feature>
<feature type="strand" evidence="31">
    <location>
        <begin position="178"/>
        <end position="180"/>
    </location>
</feature>
<feature type="strand" evidence="31">
    <location>
        <begin position="183"/>
        <end position="187"/>
    </location>
</feature>
<feature type="turn" evidence="31">
    <location>
        <begin position="189"/>
        <end position="191"/>
    </location>
</feature>
<feature type="turn" evidence="31">
    <location>
        <begin position="193"/>
        <end position="195"/>
    </location>
</feature>
<feature type="turn" evidence="31">
    <location>
        <begin position="198"/>
        <end position="202"/>
    </location>
</feature>
<feature type="strand" evidence="31">
    <location>
        <begin position="204"/>
        <end position="209"/>
    </location>
</feature>
<feature type="turn" evidence="31">
    <location>
        <begin position="210"/>
        <end position="215"/>
    </location>
</feature>
<feature type="strand" evidence="31">
    <location>
        <begin position="223"/>
        <end position="227"/>
    </location>
</feature>
<feature type="helix" evidence="31">
    <location>
        <begin position="230"/>
        <end position="243"/>
    </location>
</feature>
<feature type="helix" evidence="31">
    <location>
        <begin position="249"/>
        <end position="259"/>
    </location>
</feature>
<feature type="helix" evidence="31">
    <location>
        <begin position="262"/>
        <end position="281"/>
    </location>
</feature>
<feature type="strand" evidence="31">
    <location>
        <begin position="286"/>
        <end position="290"/>
    </location>
</feature>
<feature type="helix" evidence="31">
    <location>
        <begin position="300"/>
        <end position="306"/>
    </location>
</feature>
<feature type="strand" evidence="31">
    <location>
        <begin position="312"/>
        <end position="320"/>
    </location>
</feature>
<feature type="helix" evidence="31">
    <location>
        <begin position="322"/>
        <end position="331"/>
    </location>
</feature>
<feature type="strand" evidence="31">
    <location>
        <begin position="333"/>
        <end position="337"/>
    </location>
</feature>
<feature type="strand" evidence="31">
    <location>
        <begin position="342"/>
        <end position="345"/>
    </location>
</feature>
<feature type="strand" evidence="31">
    <location>
        <begin position="347"/>
        <end position="349"/>
    </location>
</feature>
<feature type="turn" evidence="31">
    <location>
        <begin position="351"/>
        <end position="358"/>
    </location>
</feature>
<feature type="helix" evidence="31">
    <location>
        <begin position="361"/>
        <end position="367"/>
    </location>
</feature>
<feature type="strand" evidence="31">
    <location>
        <begin position="373"/>
        <end position="377"/>
    </location>
</feature>
<feature type="helix" evidence="31">
    <location>
        <begin position="383"/>
        <end position="397"/>
    </location>
</feature>
<protein>
    <recommendedName>
        <fullName evidence="16 17 20 21 22 23 24">Cystathionine gamma-lyase</fullName>
        <shortName evidence="16 17 20">CGL</shortName>
        <shortName evidence="21 22 23 24">CSE</shortName>
        <ecNumber evidence="3 4 8 10 11">4.4.1.1</ecNumber>
    </recommendedName>
    <alternativeName>
        <fullName>Cysteine desulfhydrase</fullName>
    </alternativeName>
    <alternativeName>
        <fullName>Cysteine-protein sulfhydrase</fullName>
    </alternativeName>
    <alternativeName>
        <fullName>Gamma-cystathionase</fullName>
    </alternativeName>
    <alternativeName>
        <fullName>Homocysteine desulfhydrase</fullName>
        <ecNumber evidence="8 10">4.4.1.2</ecNumber>
    </alternativeName>
</protein>